<name>RL23_BURM9</name>
<comment type="function">
    <text evidence="1">One of the early assembly proteins it binds 23S rRNA. One of the proteins that surrounds the polypeptide exit tunnel on the outside of the ribosome. Forms the main docking site for trigger factor binding to the ribosome.</text>
</comment>
<comment type="subunit">
    <text evidence="1">Part of the 50S ribosomal subunit. Contacts protein L29, and trigger factor when it is bound to the ribosome.</text>
</comment>
<comment type="similarity">
    <text evidence="1">Belongs to the universal ribosomal protein uL23 family.</text>
</comment>
<organism>
    <name type="scientific">Burkholderia mallei (strain NCTC 10229)</name>
    <dbReference type="NCBI Taxonomy" id="412022"/>
    <lineage>
        <taxon>Bacteria</taxon>
        <taxon>Pseudomonadati</taxon>
        <taxon>Pseudomonadota</taxon>
        <taxon>Betaproteobacteria</taxon>
        <taxon>Burkholderiales</taxon>
        <taxon>Burkholderiaceae</taxon>
        <taxon>Burkholderia</taxon>
        <taxon>pseudomallei group</taxon>
    </lineage>
</organism>
<sequence>MSEIRKNDHRLMQVLLAPVISEKATLVADKNEQVVFEVAPDATKQEVKAAVELLFKVEVDSVNVLVQKGKQKRFGRSMGRRKDVKKAYVCLKPGQEINFEAEAK</sequence>
<feature type="chain" id="PRO_1000068047" description="Large ribosomal subunit protein uL23">
    <location>
        <begin position="1"/>
        <end position="104"/>
    </location>
</feature>
<proteinExistence type="inferred from homology"/>
<keyword id="KW-0687">Ribonucleoprotein</keyword>
<keyword id="KW-0689">Ribosomal protein</keyword>
<keyword id="KW-0694">RNA-binding</keyword>
<keyword id="KW-0699">rRNA-binding</keyword>
<evidence type="ECO:0000255" key="1">
    <source>
        <dbReference type="HAMAP-Rule" id="MF_01369"/>
    </source>
</evidence>
<evidence type="ECO:0000305" key="2"/>
<protein>
    <recommendedName>
        <fullName evidence="1">Large ribosomal subunit protein uL23</fullName>
    </recommendedName>
    <alternativeName>
        <fullName evidence="2">50S ribosomal protein L23</fullName>
    </alternativeName>
</protein>
<dbReference type="EMBL" id="CP000546">
    <property type="protein sequence ID" value="ABN03628.1"/>
    <property type="molecule type" value="Genomic_DNA"/>
</dbReference>
<dbReference type="RefSeq" id="WP_004199275.1">
    <property type="nucleotide sequence ID" value="NC_008836.1"/>
</dbReference>
<dbReference type="SMR" id="A2S7H8"/>
<dbReference type="GeneID" id="98107158"/>
<dbReference type="KEGG" id="bml:BMA10229_A1926"/>
<dbReference type="HOGENOM" id="CLU_037562_3_1_4"/>
<dbReference type="Proteomes" id="UP000002283">
    <property type="component" value="Chromosome I"/>
</dbReference>
<dbReference type="GO" id="GO:1990904">
    <property type="term" value="C:ribonucleoprotein complex"/>
    <property type="evidence" value="ECO:0007669"/>
    <property type="project" value="UniProtKB-KW"/>
</dbReference>
<dbReference type="GO" id="GO:0005840">
    <property type="term" value="C:ribosome"/>
    <property type="evidence" value="ECO:0007669"/>
    <property type="project" value="UniProtKB-KW"/>
</dbReference>
<dbReference type="GO" id="GO:0019843">
    <property type="term" value="F:rRNA binding"/>
    <property type="evidence" value="ECO:0007669"/>
    <property type="project" value="UniProtKB-UniRule"/>
</dbReference>
<dbReference type="GO" id="GO:0003735">
    <property type="term" value="F:structural constituent of ribosome"/>
    <property type="evidence" value="ECO:0007669"/>
    <property type="project" value="InterPro"/>
</dbReference>
<dbReference type="GO" id="GO:0006412">
    <property type="term" value="P:translation"/>
    <property type="evidence" value="ECO:0007669"/>
    <property type="project" value="UniProtKB-UniRule"/>
</dbReference>
<dbReference type="FunFam" id="3.30.70.330:FF:000001">
    <property type="entry name" value="50S ribosomal protein L23"/>
    <property type="match status" value="1"/>
</dbReference>
<dbReference type="Gene3D" id="3.30.70.330">
    <property type="match status" value="1"/>
</dbReference>
<dbReference type="HAMAP" id="MF_01369_B">
    <property type="entry name" value="Ribosomal_uL23_B"/>
    <property type="match status" value="1"/>
</dbReference>
<dbReference type="InterPro" id="IPR012677">
    <property type="entry name" value="Nucleotide-bd_a/b_plait_sf"/>
</dbReference>
<dbReference type="InterPro" id="IPR013025">
    <property type="entry name" value="Ribosomal_uL23-like"/>
</dbReference>
<dbReference type="InterPro" id="IPR012678">
    <property type="entry name" value="Ribosomal_uL23/eL15/eS24_sf"/>
</dbReference>
<dbReference type="NCBIfam" id="NF004359">
    <property type="entry name" value="PRK05738.1-3"/>
    <property type="match status" value="1"/>
</dbReference>
<dbReference type="NCBIfam" id="NF004363">
    <property type="entry name" value="PRK05738.2-4"/>
    <property type="match status" value="1"/>
</dbReference>
<dbReference type="PANTHER" id="PTHR11620">
    <property type="entry name" value="60S RIBOSOMAL PROTEIN L23A"/>
    <property type="match status" value="1"/>
</dbReference>
<dbReference type="Pfam" id="PF00276">
    <property type="entry name" value="Ribosomal_L23"/>
    <property type="match status" value="1"/>
</dbReference>
<dbReference type="SUPFAM" id="SSF54189">
    <property type="entry name" value="Ribosomal proteins S24e, L23 and L15e"/>
    <property type="match status" value="1"/>
</dbReference>
<gene>
    <name evidence="1" type="primary">rplW</name>
    <name type="ordered locus">BMA10229_A1926</name>
</gene>
<reference key="1">
    <citation type="journal article" date="2010" name="Genome Biol. Evol.">
        <title>Continuing evolution of Burkholderia mallei through genome reduction and large-scale rearrangements.</title>
        <authorList>
            <person name="Losada L."/>
            <person name="Ronning C.M."/>
            <person name="DeShazer D."/>
            <person name="Woods D."/>
            <person name="Fedorova N."/>
            <person name="Kim H.S."/>
            <person name="Shabalina S.A."/>
            <person name="Pearson T.R."/>
            <person name="Brinkac L."/>
            <person name="Tan P."/>
            <person name="Nandi T."/>
            <person name="Crabtree J."/>
            <person name="Badger J."/>
            <person name="Beckstrom-Sternberg S."/>
            <person name="Saqib M."/>
            <person name="Schutzer S.E."/>
            <person name="Keim P."/>
            <person name="Nierman W.C."/>
        </authorList>
    </citation>
    <scope>NUCLEOTIDE SEQUENCE [LARGE SCALE GENOMIC DNA]</scope>
    <source>
        <strain>NCTC 10229</strain>
    </source>
</reference>
<accession>A2S7H8</accession>